<accession>B7MM85</accession>
<dbReference type="EMBL" id="CU928161">
    <property type="protein sequence ID" value="CAR04414.1"/>
    <property type="molecule type" value="Genomic_DNA"/>
</dbReference>
<dbReference type="RefSeq" id="WP_000886078.1">
    <property type="nucleotide sequence ID" value="NC_011742.1"/>
</dbReference>
<dbReference type="SMR" id="B7MM85"/>
<dbReference type="KEGG" id="ecz:ECS88_3178"/>
<dbReference type="HOGENOM" id="CLU_007884_6_1_6"/>
<dbReference type="Proteomes" id="UP000000747">
    <property type="component" value="Chromosome"/>
</dbReference>
<dbReference type="GO" id="GO:0005737">
    <property type="term" value="C:cytoplasm"/>
    <property type="evidence" value="ECO:0007669"/>
    <property type="project" value="UniProtKB-SubCell"/>
</dbReference>
<dbReference type="GO" id="GO:0005542">
    <property type="term" value="F:folic acid binding"/>
    <property type="evidence" value="ECO:0007669"/>
    <property type="project" value="UniProtKB-UniRule"/>
</dbReference>
<dbReference type="GO" id="GO:0016226">
    <property type="term" value="P:iron-sulfur cluster assembly"/>
    <property type="evidence" value="ECO:0007669"/>
    <property type="project" value="TreeGrafter"/>
</dbReference>
<dbReference type="GO" id="GO:0009451">
    <property type="term" value="P:RNA modification"/>
    <property type="evidence" value="ECO:0007669"/>
    <property type="project" value="InterPro"/>
</dbReference>
<dbReference type="GO" id="GO:0008033">
    <property type="term" value="P:tRNA processing"/>
    <property type="evidence" value="ECO:0007669"/>
    <property type="project" value="UniProtKB-UniRule"/>
</dbReference>
<dbReference type="FunFam" id="2.40.30.160:FF:000001">
    <property type="entry name" value="tRNA-modifying protein YgfZ"/>
    <property type="match status" value="1"/>
</dbReference>
<dbReference type="FunFam" id="3.30.70.1400:FF:000002">
    <property type="entry name" value="tRNA-modifying protein YgfZ"/>
    <property type="match status" value="1"/>
</dbReference>
<dbReference type="FunFam" id="3.30.70.1630:FF:000001">
    <property type="entry name" value="tRNA-modifying protein YgfZ"/>
    <property type="match status" value="1"/>
</dbReference>
<dbReference type="Gene3D" id="2.40.30.160">
    <property type="match status" value="1"/>
</dbReference>
<dbReference type="Gene3D" id="3.30.70.1630">
    <property type="match status" value="1"/>
</dbReference>
<dbReference type="Gene3D" id="3.30.70.1400">
    <property type="entry name" value="Aminomethyltransferase beta-barrel domains"/>
    <property type="match status" value="1"/>
</dbReference>
<dbReference type="HAMAP" id="MF_01175">
    <property type="entry name" value="tRNA_modifying_YgfZ"/>
    <property type="match status" value="1"/>
</dbReference>
<dbReference type="InterPro" id="IPR006222">
    <property type="entry name" value="GCV_T_N"/>
</dbReference>
<dbReference type="InterPro" id="IPR029043">
    <property type="entry name" value="GcvT/YgfZ_C"/>
</dbReference>
<dbReference type="InterPro" id="IPR023758">
    <property type="entry name" value="tRNA-modifying_YgfZ"/>
</dbReference>
<dbReference type="InterPro" id="IPR045179">
    <property type="entry name" value="YgfZ/GcvT"/>
</dbReference>
<dbReference type="InterPro" id="IPR017703">
    <property type="entry name" value="YgfZ/GcvT_CS"/>
</dbReference>
<dbReference type="InterPro" id="IPR048451">
    <property type="entry name" value="YgfZ_barrel"/>
</dbReference>
<dbReference type="NCBIfam" id="NF007110">
    <property type="entry name" value="PRK09559.1"/>
    <property type="match status" value="1"/>
</dbReference>
<dbReference type="NCBIfam" id="TIGR03317">
    <property type="entry name" value="ygfZ_signature"/>
    <property type="match status" value="1"/>
</dbReference>
<dbReference type="PANTHER" id="PTHR22602">
    <property type="entry name" value="TRANSFERASE CAF17, MITOCHONDRIAL-RELATED"/>
    <property type="match status" value="1"/>
</dbReference>
<dbReference type="PANTHER" id="PTHR22602:SF0">
    <property type="entry name" value="TRANSFERASE CAF17, MITOCHONDRIAL-RELATED"/>
    <property type="match status" value="1"/>
</dbReference>
<dbReference type="Pfam" id="PF01571">
    <property type="entry name" value="GCV_T"/>
    <property type="match status" value="1"/>
</dbReference>
<dbReference type="Pfam" id="PF21130">
    <property type="entry name" value="YgfZ_barrel"/>
    <property type="match status" value="1"/>
</dbReference>
<dbReference type="SUPFAM" id="SSF101790">
    <property type="entry name" value="Aminomethyltransferase beta-barrel domain"/>
    <property type="match status" value="1"/>
</dbReference>
<dbReference type="SUPFAM" id="SSF103025">
    <property type="entry name" value="Folate-binding domain"/>
    <property type="match status" value="1"/>
</dbReference>
<reference key="1">
    <citation type="journal article" date="2009" name="PLoS Genet.">
        <title>Organised genome dynamics in the Escherichia coli species results in highly diverse adaptive paths.</title>
        <authorList>
            <person name="Touchon M."/>
            <person name="Hoede C."/>
            <person name="Tenaillon O."/>
            <person name="Barbe V."/>
            <person name="Baeriswyl S."/>
            <person name="Bidet P."/>
            <person name="Bingen E."/>
            <person name="Bonacorsi S."/>
            <person name="Bouchier C."/>
            <person name="Bouvet O."/>
            <person name="Calteau A."/>
            <person name="Chiapello H."/>
            <person name="Clermont O."/>
            <person name="Cruveiller S."/>
            <person name="Danchin A."/>
            <person name="Diard M."/>
            <person name="Dossat C."/>
            <person name="Karoui M.E."/>
            <person name="Frapy E."/>
            <person name="Garry L."/>
            <person name="Ghigo J.M."/>
            <person name="Gilles A.M."/>
            <person name="Johnson J."/>
            <person name="Le Bouguenec C."/>
            <person name="Lescat M."/>
            <person name="Mangenot S."/>
            <person name="Martinez-Jehanne V."/>
            <person name="Matic I."/>
            <person name="Nassif X."/>
            <person name="Oztas S."/>
            <person name="Petit M.A."/>
            <person name="Pichon C."/>
            <person name="Rouy Z."/>
            <person name="Ruf C.S."/>
            <person name="Schneider D."/>
            <person name="Tourret J."/>
            <person name="Vacherie B."/>
            <person name="Vallenet D."/>
            <person name="Medigue C."/>
            <person name="Rocha E.P.C."/>
            <person name="Denamur E."/>
        </authorList>
    </citation>
    <scope>NUCLEOTIDE SEQUENCE [LARGE SCALE GENOMIC DNA]</scope>
    <source>
        <strain>S88 / ExPEC</strain>
    </source>
</reference>
<gene>
    <name evidence="1" type="primary">ygfZ</name>
    <name type="ordered locus">ECS88_3178</name>
</gene>
<organism>
    <name type="scientific">Escherichia coli O45:K1 (strain S88 / ExPEC)</name>
    <dbReference type="NCBI Taxonomy" id="585035"/>
    <lineage>
        <taxon>Bacteria</taxon>
        <taxon>Pseudomonadati</taxon>
        <taxon>Pseudomonadota</taxon>
        <taxon>Gammaproteobacteria</taxon>
        <taxon>Enterobacterales</taxon>
        <taxon>Enterobacteriaceae</taxon>
        <taxon>Escherichia</taxon>
    </lineage>
</organism>
<comment type="function">
    <text evidence="1">Folate-binding protein involved in regulating the level of ATP-DnaA and in the modification of some tRNAs. It is probably a key factor in regulatory networks that act via tRNA modification, such as initiation of chromosomal replication.</text>
</comment>
<comment type="subcellular location">
    <subcellularLocation>
        <location evidence="1">Cytoplasm</location>
    </subcellularLocation>
</comment>
<comment type="similarity">
    <text evidence="1">Belongs to the tRNA-modifying YgfZ family.</text>
</comment>
<feature type="chain" id="PRO_1000138069" description="tRNA-modifying protein YgfZ">
    <location>
        <begin position="1"/>
        <end position="326"/>
    </location>
</feature>
<feature type="binding site" evidence="1">
    <location>
        <position position="27"/>
    </location>
    <ligand>
        <name>folate</name>
        <dbReference type="ChEBI" id="CHEBI:62501"/>
    </ligand>
</feature>
<feature type="binding site" evidence="1">
    <location>
        <position position="189"/>
    </location>
    <ligand>
        <name>folate</name>
        <dbReference type="ChEBI" id="CHEBI:62501"/>
    </ligand>
</feature>
<keyword id="KW-0963">Cytoplasm</keyword>
<keyword id="KW-0290">Folate-binding</keyword>
<keyword id="KW-1185">Reference proteome</keyword>
<keyword id="KW-0819">tRNA processing</keyword>
<evidence type="ECO:0000255" key="1">
    <source>
        <dbReference type="HAMAP-Rule" id="MF_01175"/>
    </source>
</evidence>
<protein>
    <recommendedName>
        <fullName evidence="1">tRNA-modifying protein YgfZ</fullName>
    </recommendedName>
</protein>
<name>YGFZ_ECO45</name>
<proteinExistence type="inferred from homology"/>
<sequence length="326" mass="36228">MAFTPFPPRQPTASARLPLTLMTLDDWALATITGADSEKYMQGQVTADVSQMTEDQHLLAAHCDAKGKMWSNLRLFRDGDGFAWIERRSVREPQLTELKKYAVFSKVTIAPDDERVLLGVAGFQARAALANLFSELPSREKQVVKEGATTLLWFEHPAERFLIVTDEATANMLTDKLRGEAELNNSQQWLALNIEAGFPVIDAANSGQFIPQATNLQALGGISFKKGCYTGQEMVARAKFRGANKRALWLLKGSASRLPEAGEDLELKMGENWRRTGTVLAAVKLEDGQVVVQVVMNNDMEPDSIFRVRDDANTLRIEPLPYSLEE</sequence>